<keyword id="KW-0067">ATP-binding</keyword>
<keyword id="KW-0547">Nucleotide-binding</keyword>
<keyword id="KW-0597">Phosphoprotein</keyword>
<keyword id="KW-1185">Reference proteome</keyword>
<keyword id="KW-0808">Transferase</keyword>
<keyword id="KW-0833">Ubl conjugation pathway</keyword>
<accession>Q29503</accession>
<proteinExistence type="evidence at transcript level"/>
<organism>
    <name type="scientific">Oryctolagus cuniculus</name>
    <name type="common">Rabbit</name>
    <dbReference type="NCBI Taxonomy" id="9986"/>
    <lineage>
        <taxon>Eukaryota</taxon>
        <taxon>Metazoa</taxon>
        <taxon>Chordata</taxon>
        <taxon>Craniata</taxon>
        <taxon>Vertebrata</taxon>
        <taxon>Euteleostomi</taxon>
        <taxon>Mammalia</taxon>
        <taxon>Eutheria</taxon>
        <taxon>Euarchontoglires</taxon>
        <taxon>Glires</taxon>
        <taxon>Lagomorpha</taxon>
        <taxon>Leporidae</taxon>
        <taxon>Oryctolagus</taxon>
    </lineage>
</organism>
<dbReference type="EC" id="2.3.2.23" evidence="1"/>
<dbReference type="EMBL" id="U58652">
    <property type="protein sequence ID" value="AAB02656.1"/>
    <property type="status" value="ALT_INIT"/>
    <property type="molecule type" value="mRNA"/>
</dbReference>
<dbReference type="RefSeq" id="XP_008273222.1">
    <property type="nucleotide sequence ID" value="XM_008275000.4"/>
</dbReference>
<dbReference type="SMR" id="Q29503"/>
<dbReference type="BioGRID" id="1172455">
    <property type="interactions" value="5"/>
</dbReference>
<dbReference type="FunCoup" id="Q29503">
    <property type="interactions" value="1230"/>
</dbReference>
<dbReference type="STRING" id="9986.ENSOCUP00000024929"/>
<dbReference type="PaxDb" id="9986-ENSOCUP00000024929"/>
<dbReference type="Ensembl" id="ENSOCUT00000027595.2">
    <property type="protein sequence ID" value="ENSOCUP00000024929.2"/>
    <property type="gene ID" value="ENSOCUG00000023588.2"/>
</dbReference>
<dbReference type="GeneID" id="100009436"/>
<dbReference type="KEGG" id="ocu:100009436"/>
<dbReference type="CTD" id="54926"/>
<dbReference type="eggNOG" id="KOG0425">
    <property type="taxonomic scope" value="Eukaryota"/>
</dbReference>
<dbReference type="GeneTree" id="ENSGT00940000158828"/>
<dbReference type="InParanoid" id="Q29503"/>
<dbReference type="OrthoDB" id="19692at2759"/>
<dbReference type="TreeFam" id="TF101107"/>
<dbReference type="UniPathway" id="UPA00143"/>
<dbReference type="Proteomes" id="UP000001811">
    <property type="component" value="Chromosome 1"/>
</dbReference>
<dbReference type="Bgee" id="ENSOCUG00000023588">
    <property type="expression patterns" value="Expressed in blood and 16 other cell types or tissues"/>
</dbReference>
<dbReference type="ExpressionAtlas" id="Q29503">
    <property type="expression patterns" value="baseline"/>
</dbReference>
<dbReference type="GO" id="GO:0005524">
    <property type="term" value="F:ATP binding"/>
    <property type="evidence" value="ECO:0007669"/>
    <property type="project" value="UniProtKB-KW"/>
</dbReference>
<dbReference type="GO" id="GO:0061631">
    <property type="term" value="F:ubiquitin conjugating enzyme activity"/>
    <property type="evidence" value="ECO:0007669"/>
    <property type="project" value="UniProtKB-EC"/>
</dbReference>
<dbReference type="GO" id="GO:0004842">
    <property type="term" value="F:ubiquitin-protein transferase activity"/>
    <property type="evidence" value="ECO:0000250"/>
    <property type="project" value="UniProtKB"/>
</dbReference>
<dbReference type="GO" id="GO:0070936">
    <property type="term" value="P:protein K48-linked ubiquitination"/>
    <property type="evidence" value="ECO:0000250"/>
    <property type="project" value="UniProtKB"/>
</dbReference>
<dbReference type="GO" id="GO:0006513">
    <property type="term" value="P:protein monoubiquitination"/>
    <property type="evidence" value="ECO:0000250"/>
    <property type="project" value="UniProtKB"/>
</dbReference>
<dbReference type="CDD" id="cd23803">
    <property type="entry name" value="UBCc_UBE2R"/>
    <property type="match status" value="1"/>
</dbReference>
<dbReference type="FunFam" id="3.10.110.10:FF:000009">
    <property type="entry name" value="Ubiquitin-conjugating enzyme E2 R2"/>
    <property type="match status" value="1"/>
</dbReference>
<dbReference type="Gene3D" id="3.10.110.10">
    <property type="entry name" value="Ubiquitin Conjugating Enzyme"/>
    <property type="match status" value="1"/>
</dbReference>
<dbReference type="InterPro" id="IPR050113">
    <property type="entry name" value="Ub_conjugating_enzyme"/>
</dbReference>
<dbReference type="InterPro" id="IPR000608">
    <property type="entry name" value="UBQ-conjugat_E2_core"/>
</dbReference>
<dbReference type="InterPro" id="IPR023313">
    <property type="entry name" value="UBQ-conjugating_AS"/>
</dbReference>
<dbReference type="InterPro" id="IPR016135">
    <property type="entry name" value="UBQ-conjugating_enzyme/RWD"/>
</dbReference>
<dbReference type="PANTHER" id="PTHR24067">
    <property type="entry name" value="UBIQUITIN-CONJUGATING ENZYME E2"/>
    <property type="match status" value="1"/>
</dbReference>
<dbReference type="Pfam" id="PF00179">
    <property type="entry name" value="UQ_con"/>
    <property type="match status" value="1"/>
</dbReference>
<dbReference type="SMART" id="SM00212">
    <property type="entry name" value="UBCc"/>
    <property type="match status" value="1"/>
</dbReference>
<dbReference type="SUPFAM" id="SSF54495">
    <property type="entry name" value="UBC-like"/>
    <property type="match status" value="1"/>
</dbReference>
<dbReference type="PROSITE" id="PS00183">
    <property type="entry name" value="UBC_1"/>
    <property type="match status" value="1"/>
</dbReference>
<dbReference type="PROSITE" id="PS50127">
    <property type="entry name" value="UBC_2"/>
    <property type="match status" value="1"/>
</dbReference>
<sequence length="238" mass="27166">MAQQQMTSSQKALMLELKSLQEEPVEGFRITLVDESDLYNWEVAIFGPPNTLYEGGYFKAHIKFPIDYPYSPPTFRFLTKMWHPNIYENGDVCISILHPPVDDPQSGELPSERWNPTQNVRTILLSVISLLNEPNTFSPANVDASVMFRKWRDSKGKDKEYAEIIRKQVSATKAEAEKDGVKVPTTLAEYCIKTKVPSNDNSSDLLYDDLYDDDIDDEDEEEEDADCYDDDDSGNEES</sequence>
<protein>
    <recommendedName>
        <fullName>Ubiquitin-conjugating enzyme E2 R2</fullName>
        <ecNumber evidence="1">2.3.2.23</ecNumber>
    </recommendedName>
    <alternativeName>
        <fullName>E2 ubiquitin-conjugating enzyme R2</fullName>
    </alternativeName>
    <alternativeName>
        <fullName>Ubiquitin carrier protein R2</fullName>
    </alternativeName>
    <alternativeName>
        <fullName>Ubiquitin-conjugating enzyme E2-CDC34B</fullName>
    </alternativeName>
    <alternativeName>
        <fullName>Ubiquitin-protein ligase R2</fullName>
    </alternativeName>
</protein>
<name>UB2R2_RABIT</name>
<evidence type="ECO:0000250" key="1">
    <source>
        <dbReference type="UniProtKB" id="Q712K3"/>
    </source>
</evidence>
<evidence type="ECO:0000255" key="2">
    <source>
        <dbReference type="PROSITE-ProRule" id="PRU00388"/>
    </source>
</evidence>
<evidence type="ECO:0000256" key="3">
    <source>
        <dbReference type="SAM" id="MobiDB-lite"/>
    </source>
</evidence>
<evidence type="ECO:0000305" key="4"/>
<evidence type="ECO:0000305" key="5">
    <source>
    </source>
</evidence>
<comment type="function">
    <text evidence="1">E2 ubiquitin-conjugating enzyme that accepts ubiquitin from an E1 ubiquitin-activating protein, and catalyzes its covalent attachment to other proteins by an E3 ubiquitin-protein ligase complex (By similarity). In vitro catalyzes monoubiquitination and 'Lys-48'-linked polyubiquitination (By similarity). Works in collaboration with various Cul1-RING and Cul2-RING E3 ligase complexes (By similarity). May be involved in degradation of katenin (By similarity).</text>
</comment>
<comment type="catalytic activity">
    <reaction evidence="1">
        <text>S-ubiquitinyl-[E1 ubiquitin-activating enzyme]-L-cysteine + [E2 ubiquitin-conjugating enzyme]-L-cysteine = [E1 ubiquitin-activating enzyme]-L-cysteine + S-ubiquitinyl-[E2 ubiquitin-conjugating enzyme]-L-cysteine.</text>
        <dbReference type="EC" id="2.3.2.23"/>
    </reaction>
</comment>
<comment type="activity regulation">
    <text evidence="1">Neddylation of CUL2 in the CRL2(FEM1C) E3 ligase complex increases substrate affinity of UBE2R2 and the ubiquitin-transfer rate in the E2-E3 complex.</text>
</comment>
<comment type="pathway">
    <text evidence="1">Protein modification; protein ubiquitination.</text>
</comment>
<comment type="subunit">
    <text evidence="1">Interacts with multiple Cul1-RING E3 ubiquitin-protein ligase complexes, also known as SCF (SKP1-CUL1-F-box protein) complexes, including SCF(FBXW7) and SCF(BTRC) (By similarity). Interacts with multiple Cul2-RING (CRL2) E3 ubiquitin-protein ligase complexes, also known as ECS (Elongin BC-CUL2/5-SOCS-box protein) complexes, including CRL2(FEM1C) and ECS(VHL) (By similarity). When phosphorylated, interacts with beta-TrCP (BTRC) (By similarity).</text>
</comment>
<comment type="similarity">
    <text evidence="2">Belongs to the ubiquitin-conjugating enzyme family.</text>
</comment>
<comment type="caution">
    <text evidence="5">Was originally thought to be UBE2R1/CDC34.</text>
</comment>
<comment type="sequence caution" evidence="4">
    <conflict type="erroneous initiation">
        <sequence resource="EMBL-CDS" id="AAB02656"/>
    </conflict>
</comment>
<reference key="1">
    <citation type="journal article" date="1997" name="Biochim. Biophys. Acta">
        <title>Cloning, characterization and expression of a cDNA clone encoding rabbit ubiquitin-conjugating enzyme, E2(32k).</title>
        <authorList>
            <person name="Sun B.G."/>
            <person name="Jeyaseelan K."/>
            <person name="Chung M.C.M."/>
            <person name="Tan T.-W."/>
            <person name="Chock P.B."/>
            <person name="Teo T.-S."/>
        </authorList>
    </citation>
    <scope>NUCLEOTIDE SEQUENCE [MRNA]</scope>
    <source>
        <tissue>Heart</tissue>
    </source>
</reference>
<gene>
    <name type="primary">UBE2R2</name>
    <name type="synonym">CDC34B</name>
</gene>
<feature type="chain" id="PRO_0000082453" description="Ubiquitin-conjugating enzyme E2 R2">
    <location>
        <begin position="1"/>
        <end position="238"/>
    </location>
</feature>
<feature type="domain" description="UBC core" evidence="2">
    <location>
        <begin position="8"/>
        <end position="174"/>
    </location>
</feature>
<feature type="region of interest" description="Important for ubiquitin transfer" evidence="1">
    <location>
        <begin position="98"/>
        <end position="113"/>
    </location>
</feature>
<feature type="region of interest" description="Disordered" evidence="3">
    <location>
        <begin position="194"/>
        <end position="238"/>
    </location>
</feature>
<feature type="compositionally biased region" description="Acidic residues" evidence="3">
    <location>
        <begin position="206"/>
        <end position="238"/>
    </location>
</feature>
<feature type="active site" description="Glycyl thioester intermediate" evidence="1">
    <location>
        <position position="93"/>
    </location>
</feature>
<feature type="modified residue" description="Phosphoserine; by CK2" evidence="1">
    <location>
        <position position="233"/>
    </location>
</feature>